<organism>
    <name type="scientific">Penicillium rubens (strain ATCC 28089 / DSM 1075 / NRRL 1951 / Wisconsin 54-1255)</name>
    <name type="common">Penicillium chrysogenum</name>
    <dbReference type="NCBI Taxonomy" id="500485"/>
    <lineage>
        <taxon>Eukaryota</taxon>
        <taxon>Fungi</taxon>
        <taxon>Dikarya</taxon>
        <taxon>Ascomycota</taxon>
        <taxon>Pezizomycotina</taxon>
        <taxon>Eurotiomycetes</taxon>
        <taxon>Eurotiomycetidae</taxon>
        <taxon>Eurotiales</taxon>
        <taxon>Aspergillaceae</taxon>
        <taxon>Penicillium</taxon>
        <taxon>Penicillium chrysogenum species complex</taxon>
    </lineage>
</organism>
<dbReference type="EMBL" id="AM920437">
    <property type="protein sequence ID" value="CAP98925.1"/>
    <property type="molecule type" value="Genomic_DNA"/>
</dbReference>
<dbReference type="RefSeq" id="XP_002565553.1">
    <property type="nucleotide sequence ID" value="XM_002565507.1"/>
</dbReference>
<dbReference type="SMR" id="B6HR44"/>
<dbReference type="STRING" id="500485.B6HR44"/>
<dbReference type="GlyCosmos" id="B6HR44">
    <property type="glycosylation" value="1 site, No reported glycans"/>
</dbReference>
<dbReference type="GeneID" id="8305191"/>
<dbReference type="KEGG" id="pcs:N7525_004751"/>
<dbReference type="VEuPathDB" id="FungiDB:PCH_Pc22g16370"/>
<dbReference type="eggNOG" id="ENOG502QW7A">
    <property type="taxonomic scope" value="Eukaryota"/>
</dbReference>
<dbReference type="HOGENOM" id="CLU_043316_1_0_1"/>
<dbReference type="OMA" id="NIVWIFY"/>
<dbReference type="OrthoDB" id="5983572at2759"/>
<dbReference type="BioCyc" id="PCHR:PC22G16370-MONOMER"/>
<dbReference type="Proteomes" id="UP000000724">
    <property type="component" value="Contig Pc00c22"/>
</dbReference>
<dbReference type="GO" id="GO:0005886">
    <property type="term" value="C:plasma membrane"/>
    <property type="evidence" value="ECO:0007669"/>
    <property type="project" value="UniProtKB-SubCell"/>
</dbReference>
<dbReference type="GO" id="GO:0030833">
    <property type="term" value="P:regulation of actin filament polymerization"/>
    <property type="evidence" value="ECO:0007669"/>
    <property type="project" value="TreeGrafter"/>
</dbReference>
<dbReference type="CDD" id="cd11855">
    <property type="entry name" value="SH3_Sho1p"/>
    <property type="match status" value="1"/>
</dbReference>
<dbReference type="FunFam" id="2.30.30.40:FF:000213">
    <property type="entry name" value="High osmolarity signaling protein SHO1"/>
    <property type="match status" value="1"/>
</dbReference>
<dbReference type="Gene3D" id="2.30.30.40">
    <property type="entry name" value="SH3 Domains"/>
    <property type="match status" value="1"/>
</dbReference>
<dbReference type="InterPro" id="IPR036028">
    <property type="entry name" value="SH3-like_dom_sf"/>
</dbReference>
<dbReference type="InterPro" id="IPR001452">
    <property type="entry name" value="SH3_domain"/>
</dbReference>
<dbReference type="InterPro" id="IPR035522">
    <property type="entry name" value="Sho1_SH3"/>
</dbReference>
<dbReference type="PANTHER" id="PTHR15735">
    <property type="entry name" value="FCH AND DOUBLE SH3 DOMAINS PROTEIN"/>
    <property type="match status" value="1"/>
</dbReference>
<dbReference type="PANTHER" id="PTHR15735:SF20">
    <property type="entry name" value="HIGH OSMOLARITY SIGNALING PROTEIN SHO1"/>
    <property type="match status" value="1"/>
</dbReference>
<dbReference type="Pfam" id="PF00018">
    <property type="entry name" value="SH3_1"/>
    <property type="match status" value="1"/>
</dbReference>
<dbReference type="SMART" id="SM00326">
    <property type="entry name" value="SH3"/>
    <property type="match status" value="1"/>
</dbReference>
<dbReference type="SUPFAM" id="SSF50044">
    <property type="entry name" value="SH3-domain"/>
    <property type="match status" value="1"/>
</dbReference>
<dbReference type="PROSITE" id="PS50002">
    <property type="entry name" value="SH3"/>
    <property type="match status" value="1"/>
</dbReference>
<gene>
    <name type="primary">sho1</name>
    <name type="ORF">Pc22g16370</name>
</gene>
<accession>B6HR44</accession>
<reference key="1">
    <citation type="journal article" date="2008" name="Nat. Biotechnol.">
        <title>Genome sequencing and analysis of the filamentous fungus Penicillium chrysogenum.</title>
        <authorList>
            <person name="van den Berg M.A."/>
            <person name="Albang R."/>
            <person name="Albermann K."/>
            <person name="Badger J.H."/>
            <person name="Daran J.-M."/>
            <person name="Driessen A.J.M."/>
            <person name="Garcia-Estrada C."/>
            <person name="Fedorova N.D."/>
            <person name="Harris D.M."/>
            <person name="Heijne W.H.M."/>
            <person name="Joardar V.S."/>
            <person name="Kiel J.A.K.W."/>
            <person name="Kovalchuk A."/>
            <person name="Martin J.F."/>
            <person name="Nierman W.C."/>
            <person name="Nijland J.G."/>
            <person name="Pronk J.T."/>
            <person name="Roubos J.A."/>
            <person name="van der Klei I.J."/>
            <person name="van Peij N.N.M.E."/>
            <person name="Veenhuis M."/>
            <person name="von Doehren H."/>
            <person name="Wagner C."/>
            <person name="Wortman J.R."/>
            <person name="Bovenberg R.A.L."/>
        </authorList>
    </citation>
    <scope>NUCLEOTIDE SEQUENCE [LARGE SCALE GENOMIC DNA]</scope>
    <source>
        <strain>ATCC 28089 / DSM 1075 / NRRL 1951 / Wisconsin 54-1255</strain>
    </source>
</reference>
<protein>
    <recommendedName>
        <fullName>High osmolarity signaling protein sho1</fullName>
    </recommendedName>
    <alternativeName>
        <fullName>Osmosensor sho1</fullName>
    </alternativeName>
</protein>
<comment type="function">
    <text evidence="1">Plasma membrane osmosensor that activates the high osmolarity glycerol (HOG) MAPK signaling pathway in response to high osmolarity.</text>
</comment>
<comment type="subunit">
    <text evidence="1">Forms homooligomers.</text>
</comment>
<comment type="subcellular location">
    <subcellularLocation>
        <location evidence="1">Cell membrane</location>
        <topology evidence="1">Multi-pass membrane protein</topology>
    </subcellularLocation>
</comment>
<comment type="similarity">
    <text evidence="5">Belongs to the SHO1 family.</text>
</comment>
<keyword id="KW-1003">Cell membrane</keyword>
<keyword id="KW-0325">Glycoprotein</keyword>
<keyword id="KW-0472">Membrane</keyword>
<keyword id="KW-1185">Reference proteome</keyword>
<keyword id="KW-0728">SH3 domain</keyword>
<keyword id="KW-0346">Stress response</keyword>
<keyword id="KW-0812">Transmembrane</keyword>
<keyword id="KW-1133">Transmembrane helix</keyword>
<sequence length="291" mass="31375">MAKFRPSNILGDPFALMTISISILAWLIAFISSIIADVQTQYPNYSWWAISYMFCVIVGLVTTFGTDTGHVYGVAIVGYLACGLVLTSTSANNLIYGKQASMQAAGAGFILLSMIIILWIFYFGSTPQATHRGFIDSFALNKEQPGDPSYRGSRPMSSTFGARPDTVATNNTPQMYTSAQLGGFETSSPVSGYPGGAPGAERASSAPRFGTPNPSTPGNGEQEVGEVPQPTEYPYRAKAIYSYDANPEDANEISFAKHEILEVSDVSGRWWQARKQNGDTGIAPSNYLILL</sequence>
<feature type="chain" id="PRO_0000410389" description="High osmolarity signaling protein sho1">
    <location>
        <begin position="1"/>
        <end position="291"/>
    </location>
</feature>
<feature type="topological domain" description="Cytoplasmic" evidence="2">
    <location>
        <begin position="1"/>
        <end position="14"/>
    </location>
</feature>
<feature type="transmembrane region" description="Helical" evidence="2">
    <location>
        <begin position="15"/>
        <end position="35"/>
    </location>
</feature>
<feature type="topological domain" description="Extracellular" evidence="2">
    <location>
        <begin position="36"/>
        <end position="44"/>
    </location>
</feature>
<feature type="transmembrane region" description="Helical" evidence="2">
    <location>
        <begin position="45"/>
        <end position="65"/>
    </location>
</feature>
<feature type="topological domain" description="Cytoplasmic" evidence="2">
    <location>
        <begin position="66"/>
        <end position="70"/>
    </location>
</feature>
<feature type="transmembrane region" description="Helical" evidence="2">
    <location>
        <begin position="71"/>
        <end position="91"/>
    </location>
</feature>
<feature type="topological domain" description="Extracellular" evidence="2">
    <location>
        <begin position="92"/>
        <end position="103"/>
    </location>
</feature>
<feature type="transmembrane region" description="Helical" evidence="2">
    <location>
        <begin position="104"/>
        <end position="124"/>
    </location>
</feature>
<feature type="topological domain" description="Cytoplasmic" evidence="2">
    <location>
        <begin position="125"/>
        <end position="291"/>
    </location>
</feature>
<feature type="domain" description="SH3" evidence="3">
    <location>
        <begin position="232"/>
        <end position="291"/>
    </location>
</feature>
<feature type="region of interest" description="Disordered" evidence="4">
    <location>
        <begin position="145"/>
        <end position="173"/>
    </location>
</feature>
<feature type="region of interest" description="Disordered" evidence="4">
    <location>
        <begin position="187"/>
        <end position="231"/>
    </location>
</feature>
<feature type="glycosylation site" description="N-linked (GlcNAc...) asparagine" evidence="2">
    <location>
        <position position="44"/>
    </location>
</feature>
<proteinExistence type="inferred from homology"/>
<evidence type="ECO:0000250" key="1"/>
<evidence type="ECO:0000255" key="2"/>
<evidence type="ECO:0000255" key="3">
    <source>
        <dbReference type="PROSITE-ProRule" id="PRU00192"/>
    </source>
</evidence>
<evidence type="ECO:0000256" key="4">
    <source>
        <dbReference type="SAM" id="MobiDB-lite"/>
    </source>
</evidence>
<evidence type="ECO:0000305" key="5"/>
<name>SHO1_PENRW</name>